<accession>A6TB32</accession>
<comment type="function">
    <text evidence="1">The RuvA-RuvB-RuvC complex processes Holliday junction (HJ) DNA during genetic recombination and DNA repair. Endonuclease that resolves HJ intermediates. Cleaves cruciform DNA by making single-stranded nicks across the HJ at symmetrical positions within the homologous arms, yielding a 5'-phosphate and a 3'-hydroxyl group; requires a central core of homology in the junction. The consensus cleavage sequence is 5'-(A/T)TT(C/G)-3'. Cleavage occurs on the 3'-side of the TT dinucleotide at the point of strand exchange. HJ branch migration catalyzed by RuvA-RuvB allows RuvC to scan DNA until it finds its consensus sequence, where it cleaves and resolves the cruciform DNA.</text>
</comment>
<comment type="catalytic activity">
    <reaction evidence="1">
        <text>Endonucleolytic cleavage at a junction such as a reciprocal single-stranded crossover between two homologous DNA duplexes (Holliday junction).</text>
        <dbReference type="EC" id="3.1.21.10"/>
    </reaction>
</comment>
<comment type="cofactor">
    <cofactor evidence="1">
        <name>Mg(2+)</name>
        <dbReference type="ChEBI" id="CHEBI:18420"/>
    </cofactor>
    <text evidence="1">Binds 2 Mg(2+) ion per subunit.</text>
</comment>
<comment type="subunit">
    <text evidence="1">Homodimer which binds Holliday junction (HJ) DNA. The HJ becomes 2-fold symmetrical on binding to RuvC with unstacked arms; it has a different conformation from HJ DNA in complex with RuvA. In the full resolvosome a probable DNA-RuvA(4)-RuvB(12)-RuvC(2) complex forms which resolves the HJ.</text>
</comment>
<comment type="subcellular location">
    <subcellularLocation>
        <location evidence="1">Cytoplasm</location>
    </subcellularLocation>
</comment>
<comment type="similarity">
    <text evidence="1">Belongs to the RuvC family.</text>
</comment>
<reference key="1">
    <citation type="submission" date="2006-09" db="EMBL/GenBank/DDBJ databases">
        <authorList>
            <consortium name="The Klebsiella pneumonia Genome Sequencing Project"/>
            <person name="McClelland M."/>
            <person name="Sanderson E.K."/>
            <person name="Spieth J."/>
            <person name="Clifton W.S."/>
            <person name="Latreille P."/>
            <person name="Sabo A."/>
            <person name="Pepin K."/>
            <person name="Bhonagiri V."/>
            <person name="Porwollik S."/>
            <person name="Ali J."/>
            <person name="Wilson R.K."/>
        </authorList>
    </citation>
    <scope>NUCLEOTIDE SEQUENCE [LARGE SCALE GENOMIC DNA]</scope>
    <source>
        <strain>ATCC 700721 / MGH 78578</strain>
    </source>
</reference>
<proteinExistence type="inferred from homology"/>
<sequence>MAIILGIDPGSRVTGYGVIRQVGRQLSYLGSGCIRTKVDDLPSRLKLIYAGVTEIITQFQPDYFAIEQVFMAKNADSALKLGQARGVAIVAATNQALPVFEYAARQVKQTVVGIGSAEKSQVQHMVRTLLKLPANPQADAADALAIAITHCHVSQNAAQISETRLNLARGRLR</sequence>
<name>RUVC_KLEP7</name>
<evidence type="ECO:0000255" key="1">
    <source>
        <dbReference type="HAMAP-Rule" id="MF_00034"/>
    </source>
</evidence>
<keyword id="KW-0963">Cytoplasm</keyword>
<keyword id="KW-0227">DNA damage</keyword>
<keyword id="KW-0233">DNA recombination</keyword>
<keyword id="KW-0234">DNA repair</keyword>
<keyword id="KW-0238">DNA-binding</keyword>
<keyword id="KW-0255">Endonuclease</keyword>
<keyword id="KW-0378">Hydrolase</keyword>
<keyword id="KW-0460">Magnesium</keyword>
<keyword id="KW-0479">Metal-binding</keyword>
<keyword id="KW-0540">Nuclease</keyword>
<protein>
    <recommendedName>
        <fullName evidence="1">Crossover junction endodeoxyribonuclease RuvC</fullName>
        <ecNumber evidence="1">3.1.21.10</ecNumber>
    </recommendedName>
    <alternativeName>
        <fullName evidence="1">Holliday junction nuclease RuvC</fullName>
    </alternativeName>
    <alternativeName>
        <fullName evidence="1">Holliday junction resolvase RuvC</fullName>
    </alternativeName>
</protein>
<organism>
    <name type="scientific">Klebsiella pneumoniae subsp. pneumoniae (strain ATCC 700721 / MGH 78578)</name>
    <dbReference type="NCBI Taxonomy" id="272620"/>
    <lineage>
        <taxon>Bacteria</taxon>
        <taxon>Pseudomonadati</taxon>
        <taxon>Pseudomonadota</taxon>
        <taxon>Gammaproteobacteria</taxon>
        <taxon>Enterobacterales</taxon>
        <taxon>Enterobacteriaceae</taxon>
        <taxon>Klebsiella/Raoultella group</taxon>
        <taxon>Klebsiella</taxon>
        <taxon>Klebsiella pneumoniae complex</taxon>
    </lineage>
</organism>
<dbReference type="EC" id="3.1.21.10" evidence="1"/>
<dbReference type="EMBL" id="CP000647">
    <property type="protein sequence ID" value="ABR77803.1"/>
    <property type="molecule type" value="Genomic_DNA"/>
</dbReference>
<dbReference type="RefSeq" id="WP_002911456.1">
    <property type="nucleotide sequence ID" value="NC_009648.1"/>
</dbReference>
<dbReference type="SMR" id="A6TB32"/>
<dbReference type="STRING" id="272620.KPN_02377"/>
<dbReference type="PaxDb" id="272620-KPN_02377"/>
<dbReference type="EnsemblBacteria" id="ABR77803">
    <property type="protein sequence ID" value="ABR77803"/>
    <property type="gene ID" value="KPN_02377"/>
</dbReference>
<dbReference type="KEGG" id="kpn:KPN_02377"/>
<dbReference type="HOGENOM" id="CLU_091257_3_1_6"/>
<dbReference type="Proteomes" id="UP000000265">
    <property type="component" value="Chromosome"/>
</dbReference>
<dbReference type="GO" id="GO:0005737">
    <property type="term" value="C:cytoplasm"/>
    <property type="evidence" value="ECO:0007669"/>
    <property type="project" value="UniProtKB-SubCell"/>
</dbReference>
<dbReference type="GO" id="GO:0048476">
    <property type="term" value="C:Holliday junction resolvase complex"/>
    <property type="evidence" value="ECO:0007669"/>
    <property type="project" value="UniProtKB-UniRule"/>
</dbReference>
<dbReference type="GO" id="GO:0008821">
    <property type="term" value="F:crossover junction DNA endonuclease activity"/>
    <property type="evidence" value="ECO:0007669"/>
    <property type="project" value="UniProtKB-UniRule"/>
</dbReference>
<dbReference type="GO" id="GO:0003677">
    <property type="term" value="F:DNA binding"/>
    <property type="evidence" value="ECO:0007669"/>
    <property type="project" value="UniProtKB-KW"/>
</dbReference>
<dbReference type="GO" id="GO:0000287">
    <property type="term" value="F:magnesium ion binding"/>
    <property type="evidence" value="ECO:0007669"/>
    <property type="project" value="UniProtKB-UniRule"/>
</dbReference>
<dbReference type="GO" id="GO:0006310">
    <property type="term" value="P:DNA recombination"/>
    <property type="evidence" value="ECO:0007669"/>
    <property type="project" value="UniProtKB-UniRule"/>
</dbReference>
<dbReference type="GO" id="GO:0006281">
    <property type="term" value="P:DNA repair"/>
    <property type="evidence" value="ECO:0007669"/>
    <property type="project" value="UniProtKB-UniRule"/>
</dbReference>
<dbReference type="CDD" id="cd16962">
    <property type="entry name" value="RuvC"/>
    <property type="match status" value="1"/>
</dbReference>
<dbReference type="FunFam" id="3.30.420.10:FF:000002">
    <property type="entry name" value="Crossover junction endodeoxyribonuclease RuvC"/>
    <property type="match status" value="1"/>
</dbReference>
<dbReference type="Gene3D" id="3.30.420.10">
    <property type="entry name" value="Ribonuclease H-like superfamily/Ribonuclease H"/>
    <property type="match status" value="1"/>
</dbReference>
<dbReference type="HAMAP" id="MF_00034">
    <property type="entry name" value="RuvC"/>
    <property type="match status" value="1"/>
</dbReference>
<dbReference type="InterPro" id="IPR012337">
    <property type="entry name" value="RNaseH-like_sf"/>
</dbReference>
<dbReference type="InterPro" id="IPR036397">
    <property type="entry name" value="RNaseH_sf"/>
</dbReference>
<dbReference type="InterPro" id="IPR020563">
    <property type="entry name" value="X-over_junc_endoDNase_Mg_BS"/>
</dbReference>
<dbReference type="InterPro" id="IPR002176">
    <property type="entry name" value="X-over_junc_endoDNase_RuvC"/>
</dbReference>
<dbReference type="NCBIfam" id="NF000711">
    <property type="entry name" value="PRK00039.2-1"/>
    <property type="match status" value="1"/>
</dbReference>
<dbReference type="NCBIfam" id="TIGR00228">
    <property type="entry name" value="ruvC"/>
    <property type="match status" value="1"/>
</dbReference>
<dbReference type="PANTHER" id="PTHR30194">
    <property type="entry name" value="CROSSOVER JUNCTION ENDODEOXYRIBONUCLEASE RUVC"/>
    <property type="match status" value="1"/>
</dbReference>
<dbReference type="PANTHER" id="PTHR30194:SF3">
    <property type="entry name" value="CROSSOVER JUNCTION ENDODEOXYRIBONUCLEASE RUVC"/>
    <property type="match status" value="1"/>
</dbReference>
<dbReference type="Pfam" id="PF02075">
    <property type="entry name" value="RuvC"/>
    <property type="match status" value="1"/>
</dbReference>
<dbReference type="PRINTS" id="PR00696">
    <property type="entry name" value="RSOLVASERUVC"/>
</dbReference>
<dbReference type="SUPFAM" id="SSF53098">
    <property type="entry name" value="Ribonuclease H-like"/>
    <property type="match status" value="1"/>
</dbReference>
<dbReference type="PROSITE" id="PS01321">
    <property type="entry name" value="RUVC"/>
    <property type="match status" value="1"/>
</dbReference>
<gene>
    <name evidence="1" type="primary">ruvC</name>
    <name type="ordered locus">KPN78578_23420</name>
    <name type="ORF">KPN_02377</name>
</gene>
<feature type="chain" id="PRO_1000002770" description="Crossover junction endodeoxyribonuclease RuvC">
    <location>
        <begin position="1"/>
        <end position="173"/>
    </location>
</feature>
<feature type="active site" evidence="1">
    <location>
        <position position="8"/>
    </location>
</feature>
<feature type="active site" evidence="1">
    <location>
        <position position="67"/>
    </location>
</feature>
<feature type="active site" evidence="1">
    <location>
        <position position="139"/>
    </location>
</feature>
<feature type="binding site" evidence="1">
    <location>
        <position position="8"/>
    </location>
    <ligand>
        <name>Mg(2+)</name>
        <dbReference type="ChEBI" id="CHEBI:18420"/>
        <label>1</label>
    </ligand>
</feature>
<feature type="binding site" evidence="1">
    <location>
        <position position="67"/>
    </location>
    <ligand>
        <name>Mg(2+)</name>
        <dbReference type="ChEBI" id="CHEBI:18420"/>
        <label>2</label>
    </ligand>
</feature>
<feature type="binding site" evidence="1">
    <location>
        <position position="139"/>
    </location>
    <ligand>
        <name>Mg(2+)</name>
        <dbReference type="ChEBI" id="CHEBI:18420"/>
        <label>1</label>
    </ligand>
</feature>